<comment type="function">
    <text evidence="1">Binds to the 23S rRNA.</text>
</comment>
<comment type="similarity">
    <text evidence="1">Belongs to the bacterial ribosomal protein bL9 family.</text>
</comment>
<sequence>MKPQLLLLEDVDGLGRSGDLVVAKPGYVRNYLLPKGKAVVASAGTLRLQAKLQEQRLLQAAADKEESLRLAEMLRSIVLDFQVRVDSENNMYGSVTVNDMISAAEQQGVVLTRKNFPRSHSGIKNLGRHVVGLKLKEGVTADLHLEVRADHEIIEQKELQSAEEQEG</sequence>
<proteinExistence type="inferred from homology"/>
<accession>Q3KKN8</accession>
<reference key="1">
    <citation type="journal article" date="2005" name="Infect. Immun.">
        <title>Comparative genomic analysis of Chlamydia trachomatis oculotropic and genitotropic strains.</title>
        <authorList>
            <person name="Carlson J.H."/>
            <person name="Porcella S.F."/>
            <person name="McClarty G."/>
            <person name="Caldwell H.D."/>
        </authorList>
    </citation>
    <scope>NUCLEOTIDE SEQUENCE [LARGE SCALE GENOMIC DNA]</scope>
    <source>
        <strain>ATCC VR-571B / DSM 19440 / HAR-13</strain>
    </source>
</reference>
<gene>
    <name evidence="1" type="primary">rplI</name>
    <name type="ordered locus">CTA_0875</name>
</gene>
<feature type="chain" id="PRO_0000236504" description="Large ribosomal subunit protein bL9">
    <location>
        <begin position="1"/>
        <end position="167"/>
    </location>
</feature>
<organism>
    <name type="scientific">Chlamydia trachomatis serovar A (strain ATCC VR-571B / DSM 19440 / HAR-13)</name>
    <dbReference type="NCBI Taxonomy" id="315277"/>
    <lineage>
        <taxon>Bacteria</taxon>
        <taxon>Pseudomonadati</taxon>
        <taxon>Chlamydiota</taxon>
        <taxon>Chlamydiia</taxon>
        <taxon>Chlamydiales</taxon>
        <taxon>Chlamydiaceae</taxon>
        <taxon>Chlamydia/Chlamydophila group</taxon>
        <taxon>Chlamydia</taxon>
    </lineage>
</organism>
<name>RL9_CHLTA</name>
<keyword id="KW-0687">Ribonucleoprotein</keyword>
<keyword id="KW-0689">Ribosomal protein</keyword>
<keyword id="KW-0694">RNA-binding</keyword>
<keyword id="KW-0699">rRNA-binding</keyword>
<dbReference type="EMBL" id="CP000051">
    <property type="protein sequence ID" value="AAX51084.1"/>
    <property type="molecule type" value="Genomic_DNA"/>
</dbReference>
<dbReference type="RefSeq" id="WP_009872185.1">
    <property type="nucleotide sequence ID" value="NC_007429.1"/>
</dbReference>
<dbReference type="SMR" id="Q3KKN8"/>
<dbReference type="KEGG" id="cta:CTA_0875"/>
<dbReference type="HOGENOM" id="CLU_078938_5_1_0"/>
<dbReference type="Proteomes" id="UP000002532">
    <property type="component" value="Chromosome"/>
</dbReference>
<dbReference type="GO" id="GO:1990904">
    <property type="term" value="C:ribonucleoprotein complex"/>
    <property type="evidence" value="ECO:0007669"/>
    <property type="project" value="UniProtKB-KW"/>
</dbReference>
<dbReference type="GO" id="GO:0005840">
    <property type="term" value="C:ribosome"/>
    <property type="evidence" value="ECO:0007669"/>
    <property type="project" value="UniProtKB-KW"/>
</dbReference>
<dbReference type="GO" id="GO:0019843">
    <property type="term" value="F:rRNA binding"/>
    <property type="evidence" value="ECO:0007669"/>
    <property type="project" value="UniProtKB-UniRule"/>
</dbReference>
<dbReference type="GO" id="GO:0003735">
    <property type="term" value="F:structural constituent of ribosome"/>
    <property type="evidence" value="ECO:0007669"/>
    <property type="project" value="InterPro"/>
</dbReference>
<dbReference type="GO" id="GO:0006412">
    <property type="term" value="P:translation"/>
    <property type="evidence" value="ECO:0007669"/>
    <property type="project" value="UniProtKB-UniRule"/>
</dbReference>
<dbReference type="Gene3D" id="3.10.430.100">
    <property type="entry name" value="Ribosomal protein L9, C-terminal domain"/>
    <property type="match status" value="1"/>
</dbReference>
<dbReference type="Gene3D" id="3.40.5.10">
    <property type="entry name" value="Ribosomal protein L9, N-terminal domain"/>
    <property type="match status" value="1"/>
</dbReference>
<dbReference type="HAMAP" id="MF_00503">
    <property type="entry name" value="Ribosomal_bL9"/>
    <property type="match status" value="1"/>
</dbReference>
<dbReference type="InterPro" id="IPR000244">
    <property type="entry name" value="Ribosomal_bL9"/>
</dbReference>
<dbReference type="InterPro" id="IPR009027">
    <property type="entry name" value="Ribosomal_bL9/RNase_H1_N"/>
</dbReference>
<dbReference type="InterPro" id="IPR020594">
    <property type="entry name" value="Ribosomal_bL9_bac/chp"/>
</dbReference>
<dbReference type="InterPro" id="IPR020069">
    <property type="entry name" value="Ribosomal_bL9_C"/>
</dbReference>
<dbReference type="InterPro" id="IPR036791">
    <property type="entry name" value="Ribosomal_bL9_C_sf"/>
</dbReference>
<dbReference type="InterPro" id="IPR020070">
    <property type="entry name" value="Ribosomal_bL9_N"/>
</dbReference>
<dbReference type="InterPro" id="IPR036935">
    <property type="entry name" value="Ribosomal_bL9_N_sf"/>
</dbReference>
<dbReference type="NCBIfam" id="TIGR00158">
    <property type="entry name" value="L9"/>
    <property type="match status" value="1"/>
</dbReference>
<dbReference type="PANTHER" id="PTHR21368">
    <property type="entry name" value="50S RIBOSOMAL PROTEIN L9"/>
    <property type="match status" value="1"/>
</dbReference>
<dbReference type="Pfam" id="PF03948">
    <property type="entry name" value="Ribosomal_L9_C"/>
    <property type="match status" value="1"/>
</dbReference>
<dbReference type="Pfam" id="PF01281">
    <property type="entry name" value="Ribosomal_L9_N"/>
    <property type="match status" value="1"/>
</dbReference>
<dbReference type="SUPFAM" id="SSF55658">
    <property type="entry name" value="L9 N-domain-like"/>
    <property type="match status" value="1"/>
</dbReference>
<dbReference type="SUPFAM" id="SSF55653">
    <property type="entry name" value="Ribosomal protein L9 C-domain"/>
    <property type="match status" value="1"/>
</dbReference>
<dbReference type="PROSITE" id="PS00651">
    <property type="entry name" value="RIBOSOMAL_L9"/>
    <property type="match status" value="1"/>
</dbReference>
<protein>
    <recommendedName>
        <fullName evidence="1">Large ribosomal subunit protein bL9</fullName>
    </recommendedName>
    <alternativeName>
        <fullName evidence="2">50S ribosomal protein L9</fullName>
    </alternativeName>
</protein>
<evidence type="ECO:0000255" key="1">
    <source>
        <dbReference type="HAMAP-Rule" id="MF_00503"/>
    </source>
</evidence>
<evidence type="ECO:0000305" key="2"/>